<sequence length="238" mass="25984">MRPNNRELNQVRPVKITRHYTRYAEGSVLVEFGETKVLCNATVEETVPRFLKGQQQGWVTAEYGMLPRSTHSRMQREAAKGKQGGRTMEIQRLIARSLRAVVDLKALGERTVTVDCDVIQADGGTRTAAITGACVALHDAMSKLVADGVLKENPMKGLVAAISVGIVDGNAVCDLEYVEDSNAETDMNVVMVEDGRLVEVQGTAEGEPFSHMELLQLLDLAHQGINQLLDAQRKALGL</sequence>
<accession>B3GZP5</accession>
<comment type="function">
    <text evidence="1">Phosphorolytic 3'-5' exoribonuclease that plays an important role in tRNA 3'-end maturation. Removes nucleotide residues following the 3'-CCA terminus of tRNAs; can also add nucleotides to the ends of RNA molecules by using nucleoside diphosphates as substrates, but this may not be physiologically important. Probably plays a role in initiation of 16S rRNA degradation (leading to ribosome degradation) during starvation.</text>
</comment>
<comment type="catalytic activity">
    <reaction evidence="1">
        <text>tRNA(n+1) + phosphate = tRNA(n) + a ribonucleoside 5'-diphosphate</text>
        <dbReference type="Rhea" id="RHEA:10628"/>
        <dbReference type="Rhea" id="RHEA-COMP:17343"/>
        <dbReference type="Rhea" id="RHEA-COMP:17344"/>
        <dbReference type="ChEBI" id="CHEBI:43474"/>
        <dbReference type="ChEBI" id="CHEBI:57930"/>
        <dbReference type="ChEBI" id="CHEBI:173114"/>
        <dbReference type="EC" id="2.7.7.56"/>
    </reaction>
</comment>
<comment type="subunit">
    <text evidence="1">Homohexameric ring arranged as a trimer of dimers.</text>
</comment>
<comment type="similarity">
    <text evidence="1">Belongs to the RNase PH family.</text>
</comment>
<feature type="chain" id="PRO_1000129312" description="Ribonuclease PH">
    <location>
        <begin position="1"/>
        <end position="238"/>
    </location>
</feature>
<feature type="binding site" evidence="1">
    <location>
        <position position="86"/>
    </location>
    <ligand>
        <name>phosphate</name>
        <dbReference type="ChEBI" id="CHEBI:43474"/>
        <note>substrate</note>
    </ligand>
</feature>
<feature type="binding site" evidence="1">
    <location>
        <begin position="124"/>
        <end position="126"/>
    </location>
    <ligand>
        <name>phosphate</name>
        <dbReference type="ChEBI" id="CHEBI:43474"/>
        <note>substrate</note>
    </ligand>
</feature>
<protein>
    <recommendedName>
        <fullName evidence="1">Ribonuclease PH</fullName>
        <shortName evidence="1">RNase PH</shortName>
        <ecNumber evidence="1">2.7.7.56</ecNumber>
    </recommendedName>
    <alternativeName>
        <fullName evidence="1">tRNA nucleotidyltransferase</fullName>
    </alternativeName>
</protein>
<keyword id="KW-0548">Nucleotidyltransferase</keyword>
<keyword id="KW-0694">RNA-binding</keyword>
<keyword id="KW-0698">rRNA processing</keyword>
<keyword id="KW-0808">Transferase</keyword>
<keyword id="KW-0819">tRNA processing</keyword>
<keyword id="KW-0820">tRNA-binding</keyword>
<gene>
    <name evidence="1" type="primary">rph</name>
    <name type="ordered locus">APP7_0055</name>
</gene>
<evidence type="ECO:0000255" key="1">
    <source>
        <dbReference type="HAMAP-Rule" id="MF_00564"/>
    </source>
</evidence>
<reference key="1">
    <citation type="submission" date="2008-06" db="EMBL/GenBank/DDBJ databases">
        <title>Genome and proteome analysis of A. pleuropneumoniae serotype 7.</title>
        <authorList>
            <person name="Linke B."/>
            <person name="Buettner F."/>
            <person name="Martinez-Arias R."/>
            <person name="Goesmann A."/>
            <person name="Baltes N."/>
            <person name="Tegetmeyer H."/>
            <person name="Singh M."/>
            <person name="Gerlach G.F."/>
        </authorList>
    </citation>
    <scope>NUCLEOTIDE SEQUENCE [LARGE SCALE GENOMIC DNA]</scope>
    <source>
        <strain>AP76</strain>
    </source>
</reference>
<proteinExistence type="inferred from homology"/>
<dbReference type="EC" id="2.7.7.56" evidence="1"/>
<dbReference type="EMBL" id="CP001091">
    <property type="protein sequence ID" value="ACE60707.1"/>
    <property type="molecule type" value="Genomic_DNA"/>
</dbReference>
<dbReference type="RefSeq" id="WP_005595679.1">
    <property type="nucleotide sequence ID" value="NC_010939.1"/>
</dbReference>
<dbReference type="SMR" id="B3GZP5"/>
<dbReference type="GeneID" id="48598196"/>
<dbReference type="KEGG" id="apa:APP7_0055"/>
<dbReference type="HOGENOM" id="CLU_050858_0_0_6"/>
<dbReference type="Proteomes" id="UP000001226">
    <property type="component" value="Chromosome"/>
</dbReference>
<dbReference type="GO" id="GO:0000175">
    <property type="term" value="F:3'-5'-RNA exonuclease activity"/>
    <property type="evidence" value="ECO:0007669"/>
    <property type="project" value="UniProtKB-UniRule"/>
</dbReference>
<dbReference type="GO" id="GO:0000049">
    <property type="term" value="F:tRNA binding"/>
    <property type="evidence" value="ECO:0007669"/>
    <property type="project" value="UniProtKB-UniRule"/>
</dbReference>
<dbReference type="GO" id="GO:0009022">
    <property type="term" value="F:tRNA nucleotidyltransferase activity"/>
    <property type="evidence" value="ECO:0007669"/>
    <property type="project" value="UniProtKB-UniRule"/>
</dbReference>
<dbReference type="GO" id="GO:0016075">
    <property type="term" value="P:rRNA catabolic process"/>
    <property type="evidence" value="ECO:0007669"/>
    <property type="project" value="UniProtKB-UniRule"/>
</dbReference>
<dbReference type="GO" id="GO:0006364">
    <property type="term" value="P:rRNA processing"/>
    <property type="evidence" value="ECO:0007669"/>
    <property type="project" value="UniProtKB-KW"/>
</dbReference>
<dbReference type="GO" id="GO:0008033">
    <property type="term" value="P:tRNA processing"/>
    <property type="evidence" value="ECO:0007669"/>
    <property type="project" value="UniProtKB-UniRule"/>
</dbReference>
<dbReference type="CDD" id="cd11362">
    <property type="entry name" value="RNase_PH_bact"/>
    <property type="match status" value="1"/>
</dbReference>
<dbReference type="FunFam" id="3.30.230.70:FF:000003">
    <property type="entry name" value="Ribonuclease PH"/>
    <property type="match status" value="1"/>
</dbReference>
<dbReference type="Gene3D" id="3.30.230.70">
    <property type="entry name" value="GHMP Kinase, N-terminal domain"/>
    <property type="match status" value="1"/>
</dbReference>
<dbReference type="HAMAP" id="MF_00564">
    <property type="entry name" value="RNase_PH"/>
    <property type="match status" value="1"/>
</dbReference>
<dbReference type="InterPro" id="IPR001247">
    <property type="entry name" value="ExoRNase_PH_dom1"/>
</dbReference>
<dbReference type="InterPro" id="IPR015847">
    <property type="entry name" value="ExoRNase_PH_dom2"/>
</dbReference>
<dbReference type="InterPro" id="IPR036345">
    <property type="entry name" value="ExoRNase_PH_dom2_sf"/>
</dbReference>
<dbReference type="InterPro" id="IPR027408">
    <property type="entry name" value="PNPase/RNase_PH_dom_sf"/>
</dbReference>
<dbReference type="InterPro" id="IPR020568">
    <property type="entry name" value="Ribosomal_Su5_D2-typ_SF"/>
</dbReference>
<dbReference type="InterPro" id="IPR050080">
    <property type="entry name" value="RNase_PH"/>
</dbReference>
<dbReference type="InterPro" id="IPR002381">
    <property type="entry name" value="RNase_PH_bac-type"/>
</dbReference>
<dbReference type="InterPro" id="IPR018336">
    <property type="entry name" value="RNase_PH_CS"/>
</dbReference>
<dbReference type="NCBIfam" id="TIGR01966">
    <property type="entry name" value="RNasePH"/>
    <property type="match status" value="1"/>
</dbReference>
<dbReference type="PANTHER" id="PTHR11953">
    <property type="entry name" value="EXOSOME COMPLEX COMPONENT"/>
    <property type="match status" value="1"/>
</dbReference>
<dbReference type="PANTHER" id="PTHR11953:SF0">
    <property type="entry name" value="EXOSOME COMPLEX COMPONENT RRP41"/>
    <property type="match status" value="1"/>
</dbReference>
<dbReference type="Pfam" id="PF01138">
    <property type="entry name" value="RNase_PH"/>
    <property type="match status" value="1"/>
</dbReference>
<dbReference type="Pfam" id="PF03725">
    <property type="entry name" value="RNase_PH_C"/>
    <property type="match status" value="1"/>
</dbReference>
<dbReference type="SUPFAM" id="SSF55666">
    <property type="entry name" value="Ribonuclease PH domain 2-like"/>
    <property type="match status" value="1"/>
</dbReference>
<dbReference type="SUPFAM" id="SSF54211">
    <property type="entry name" value="Ribosomal protein S5 domain 2-like"/>
    <property type="match status" value="1"/>
</dbReference>
<dbReference type="PROSITE" id="PS01277">
    <property type="entry name" value="RIBONUCLEASE_PH"/>
    <property type="match status" value="1"/>
</dbReference>
<name>RNPH_ACTP7</name>
<organism>
    <name type="scientific">Actinobacillus pleuropneumoniae serotype 7 (strain AP76)</name>
    <dbReference type="NCBI Taxonomy" id="537457"/>
    <lineage>
        <taxon>Bacteria</taxon>
        <taxon>Pseudomonadati</taxon>
        <taxon>Pseudomonadota</taxon>
        <taxon>Gammaproteobacteria</taxon>
        <taxon>Pasteurellales</taxon>
        <taxon>Pasteurellaceae</taxon>
        <taxon>Actinobacillus</taxon>
    </lineage>
</organism>